<evidence type="ECO:0000255" key="1"/>
<evidence type="ECO:0000269" key="2">
    <source>
    </source>
</evidence>
<organism>
    <name type="scientific">His1 virus (isolate Australia/Victoria)</name>
    <name type="common">His1V</name>
    <name type="synonym">Haloarcula hispanica virus 1</name>
    <dbReference type="NCBI Taxonomy" id="654912"/>
    <lineage>
        <taxon>Viruses</taxon>
        <taxon>Viruses incertae sedis</taxon>
        <taxon>Halspiviridae</taxon>
        <taxon>Salterprovirus</taxon>
        <taxon>Salterprovirus His1</taxon>
    </lineage>
</organism>
<keyword id="KW-0175">Coiled coil</keyword>
<keyword id="KW-0903">Direct protein sequencing</keyword>
<keyword id="KW-1185">Reference proteome</keyword>
<keyword id="KW-0946">Virion</keyword>
<reference key="1">
    <citation type="journal article" date="2006" name="Virology">
        <title>His1 and His2 are distantly related, spindle-shaped haloviruses belonging to the novel virus group, Salterprovirus.</title>
        <authorList>
            <person name="Bath C."/>
            <person name="Cukalac T."/>
            <person name="Porter K."/>
            <person name="Dyall-Smith M.L."/>
        </authorList>
    </citation>
    <scope>NUCLEOTIDE SEQUENCE [GENOMIC DNA]</scope>
</reference>
<reference key="2">
    <citation type="journal article" date="2013" name="Environ. Microbiol.">
        <title>Modified coat protein forms the flexible spindle-shaped virion of haloarchaeal virus His1.</title>
        <authorList>
            <person name="Pietilae M.K."/>
            <person name="Atanasova N.S."/>
            <person name="Oksanen H.M."/>
            <person name="Bamford D.H."/>
        </authorList>
    </citation>
    <scope>PROTEIN SEQUENCE OF 34-51</scope>
    <scope>SUBCELLULAR LOCATION</scope>
</reference>
<comment type="subcellular location">
    <subcellularLocation>
        <location evidence="2">Virion</location>
    </subcellularLocation>
</comment>
<comment type="miscellaneous">
    <text evidence="2">The virion does not contain any lipid membrane.</text>
</comment>
<proteinExistence type="evidence at protein level"/>
<feature type="chain" id="PRO_0000384880" description="Structural protein 11">
    <location>
        <begin position="1"/>
        <end position="105"/>
    </location>
</feature>
<feature type="coiled-coil region" evidence="1">
    <location>
        <begin position="59"/>
        <end position="97"/>
    </location>
</feature>
<protein>
    <recommendedName>
        <fullName>Structural protein 11</fullName>
    </recommendedName>
</protein>
<sequence>MPGAVELDENTINPVSDIAYKDDNGNWRAGPDAKKGYEQGQFIDSDYAEKATSIRRTTNLIKSIQRARDVSEGEARELKDDMVTELEKAETKEERRDIWQKYGSP</sequence>
<accession>Q25BI4</accession>
<name>VP11_HIS1I</name>
<dbReference type="EMBL" id="AF191796">
    <property type="protein sequence ID" value="AAQ13723.1"/>
    <property type="molecule type" value="Genomic_DNA"/>
</dbReference>
<dbReference type="RefSeq" id="YP_529523.1">
    <property type="nucleotide sequence ID" value="NC_007914.1"/>
</dbReference>
<dbReference type="SMR" id="Q25BI4"/>
<dbReference type="KEGG" id="vg:5142391"/>
<dbReference type="Proteomes" id="UP000007024">
    <property type="component" value="Segment"/>
</dbReference>
<dbReference type="GO" id="GO:0044423">
    <property type="term" value="C:virion component"/>
    <property type="evidence" value="ECO:0007669"/>
    <property type="project" value="UniProtKB-KW"/>
</dbReference>
<organismHost>
    <name type="scientific">Haloarcula hispanica</name>
    <dbReference type="NCBI Taxonomy" id="51589"/>
</organismHost>
<gene>
    <name type="ORF">ORF11</name>
</gene>